<dbReference type="EC" id="4.2.1.33" evidence="1"/>
<dbReference type="EMBL" id="CR555306">
    <property type="protein sequence ID" value="CAI08816.1"/>
    <property type="molecule type" value="Genomic_DNA"/>
</dbReference>
<dbReference type="RefSeq" id="WP_011238499.1">
    <property type="nucleotide sequence ID" value="NC_006513.1"/>
</dbReference>
<dbReference type="SMR" id="Q5P1J8"/>
<dbReference type="STRING" id="76114.ebA4757"/>
<dbReference type="KEGG" id="eba:ebA4757"/>
<dbReference type="eggNOG" id="COG0065">
    <property type="taxonomic scope" value="Bacteria"/>
</dbReference>
<dbReference type="HOGENOM" id="CLU_006714_3_4_4"/>
<dbReference type="OrthoDB" id="9802769at2"/>
<dbReference type="UniPathway" id="UPA00048">
    <property type="reaction ID" value="UER00071"/>
</dbReference>
<dbReference type="Proteomes" id="UP000006552">
    <property type="component" value="Chromosome"/>
</dbReference>
<dbReference type="GO" id="GO:0003861">
    <property type="term" value="F:3-isopropylmalate dehydratase activity"/>
    <property type="evidence" value="ECO:0007669"/>
    <property type="project" value="UniProtKB-UniRule"/>
</dbReference>
<dbReference type="GO" id="GO:0051539">
    <property type="term" value="F:4 iron, 4 sulfur cluster binding"/>
    <property type="evidence" value="ECO:0007669"/>
    <property type="project" value="UniProtKB-KW"/>
</dbReference>
<dbReference type="GO" id="GO:0046872">
    <property type="term" value="F:metal ion binding"/>
    <property type="evidence" value="ECO:0007669"/>
    <property type="project" value="UniProtKB-KW"/>
</dbReference>
<dbReference type="GO" id="GO:0009098">
    <property type="term" value="P:L-leucine biosynthetic process"/>
    <property type="evidence" value="ECO:0007669"/>
    <property type="project" value="UniProtKB-UniRule"/>
</dbReference>
<dbReference type="CDD" id="cd01583">
    <property type="entry name" value="IPMI"/>
    <property type="match status" value="1"/>
</dbReference>
<dbReference type="FunFam" id="3.30.499.10:FF:000007">
    <property type="entry name" value="3-isopropylmalate dehydratase large subunit"/>
    <property type="match status" value="1"/>
</dbReference>
<dbReference type="Gene3D" id="3.30.499.10">
    <property type="entry name" value="Aconitase, domain 3"/>
    <property type="match status" value="2"/>
</dbReference>
<dbReference type="HAMAP" id="MF_01026">
    <property type="entry name" value="LeuC_type1"/>
    <property type="match status" value="1"/>
</dbReference>
<dbReference type="InterPro" id="IPR004430">
    <property type="entry name" value="3-IsopropMal_deHydase_lsu"/>
</dbReference>
<dbReference type="InterPro" id="IPR015931">
    <property type="entry name" value="Acnase/IPM_dHydase_lsu_aba_1/3"/>
</dbReference>
<dbReference type="InterPro" id="IPR001030">
    <property type="entry name" value="Acoase/IPM_deHydtase_lsu_aba"/>
</dbReference>
<dbReference type="InterPro" id="IPR018136">
    <property type="entry name" value="Aconitase_4Fe-4S_BS"/>
</dbReference>
<dbReference type="InterPro" id="IPR036008">
    <property type="entry name" value="Aconitase_4Fe-4S_dom"/>
</dbReference>
<dbReference type="InterPro" id="IPR050067">
    <property type="entry name" value="IPM_dehydratase_rel_enz"/>
</dbReference>
<dbReference type="InterPro" id="IPR033941">
    <property type="entry name" value="IPMI_cat"/>
</dbReference>
<dbReference type="NCBIfam" id="TIGR00170">
    <property type="entry name" value="leuC"/>
    <property type="match status" value="1"/>
</dbReference>
<dbReference type="NCBIfam" id="NF004016">
    <property type="entry name" value="PRK05478.1"/>
    <property type="match status" value="1"/>
</dbReference>
<dbReference type="NCBIfam" id="NF009116">
    <property type="entry name" value="PRK12466.1"/>
    <property type="match status" value="1"/>
</dbReference>
<dbReference type="PANTHER" id="PTHR43822:SF9">
    <property type="entry name" value="3-ISOPROPYLMALATE DEHYDRATASE"/>
    <property type="match status" value="1"/>
</dbReference>
<dbReference type="PANTHER" id="PTHR43822">
    <property type="entry name" value="HOMOACONITASE, MITOCHONDRIAL-RELATED"/>
    <property type="match status" value="1"/>
</dbReference>
<dbReference type="Pfam" id="PF00330">
    <property type="entry name" value="Aconitase"/>
    <property type="match status" value="1"/>
</dbReference>
<dbReference type="PRINTS" id="PR00415">
    <property type="entry name" value="ACONITASE"/>
</dbReference>
<dbReference type="SUPFAM" id="SSF53732">
    <property type="entry name" value="Aconitase iron-sulfur domain"/>
    <property type="match status" value="1"/>
</dbReference>
<dbReference type="PROSITE" id="PS00450">
    <property type="entry name" value="ACONITASE_1"/>
    <property type="match status" value="1"/>
</dbReference>
<dbReference type="PROSITE" id="PS01244">
    <property type="entry name" value="ACONITASE_2"/>
    <property type="match status" value="1"/>
</dbReference>
<gene>
    <name evidence="1" type="primary">leuC</name>
    <name type="ordered locus">AZOSEA26910</name>
    <name type="ORF">ebA4757</name>
</gene>
<evidence type="ECO:0000255" key="1">
    <source>
        <dbReference type="HAMAP-Rule" id="MF_01026"/>
    </source>
</evidence>
<name>LEUC_AROAE</name>
<sequence>MEAQTLYEKLWSSHVVHQEADGTALIYIDRHLIHEVTSPQAFEGLKLAGRKPWRVSSIVATADHNTPTDHWERGILDPVSRQQVETLDANIREVGALAYFPFRDARQGIVHVIGPEIGATLPGMTVVCGDSHTSTHGAFACLAHGIGTSEVEHVLATQCLLQKRSKTMLVRVDGELGRGVSAKDIALAIIGRLGTAGGTGYAIEFGGSAIRALSMEGRMTICNMAIEAGARAGLVAVDQTTIDYLRDKPLAPKGQAWEQAVAYWRTLKTDDGAKFDKIVELDAAQIQPQVTWGTSPEMVETVSGRVPDPAGIGDPVRREGIERALKYMGLAPNTPISEIPVDQVFIGSCTNSRIEDLREAASVAKGRSKAPSVKRVLVVPGSGLVKRQAEAEGLHEVFLAAGFEWREPGCSMCLAMNADRLEPGEHCASTSNRNFEGRQGAGGRTHLVSPAMAAAAAVVGHFIDVRELA</sequence>
<organism>
    <name type="scientific">Aromatoleum aromaticum (strain DSM 19018 / LMG 30748 / EbN1)</name>
    <name type="common">Azoarcus sp. (strain EbN1)</name>
    <dbReference type="NCBI Taxonomy" id="76114"/>
    <lineage>
        <taxon>Bacteria</taxon>
        <taxon>Pseudomonadati</taxon>
        <taxon>Pseudomonadota</taxon>
        <taxon>Betaproteobacteria</taxon>
        <taxon>Rhodocyclales</taxon>
        <taxon>Rhodocyclaceae</taxon>
        <taxon>Aromatoleum</taxon>
    </lineage>
</organism>
<protein>
    <recommendedName>
        <fullName evidence="1">3-isopropylmalate dehydratase large subunit</fullName>
        <ecNumber evidence="1">4.2.1.33</ecNumber>
    </recommendedName>
    <alternativeName>
        <fullName evidence="1">Alpha-IPM isomerase</fullName>
        <shortName evidence="1">IPMI</shortName>
    </alternativeName>
    <alternativeName>
        <fullName evidence="1">Isopropylmalate isomerase</fullName>
    </alternativeName>
</protein>
<reference key="1">
    <citation type="journal article" date="2005" name="Arch. Microbiol.">
        <title>The genome sequence of an anaerobic aromatic-degrading denitrifying bacterium, strain EbN1.</title>
        <authorList>
            <person name="Rabus R."/>
            <person name="Kube M."/>
            <person name="Heider J."/>
            <person name="Beck A."/>
            <person name="Heitmann K."/>
            <person name="Widdel F."/>
            <person name="Reinhardt R."/>
        </authorList>
    </citation>
    <scope>NUCLEOTIDE SEQUENCE [LARGE SCALE GENOMIC DNA]</scope>
    <source>
        <strain>DSM 19018 / LMG 30748 / EbN1</strain>
    </source>
</reference>
<feature type="chain" id="PRO_0000076691" description="3-isopropylmalate dehydratase large subunit">
    <location>
        <begin position="1"/>
        <end position="469"/>
    </location>
</feature>
<feature type="binding site" evidence="1">
    <location>
        <position position="349"/>
    </location>
    <ligand>
        <name>[4Fe-4S] cluster</name>
        <dbReference type="ChEBI" id="CHEBI:49883"/>
    </ligand>
</feature>
<feature type="binding site" evidence="1">
    <location>
        <position position="410"/>
    </location>
    <ligand>
        <name>[4Fe-4S] cluster</name>
        <dbReference type="ChEBI" id="CHEBI:49883"/>
    </ligand>
</feature>
<feature type="binding site" evidence="1">
    <location>
        <position position="413"/>
    </location>
    <ligand>
        <name>[4Fe-4S] cluster</name>
        <dbReference type="ChEBI" id="CHEBI:49883"/>
    </ligand>
</feature>
<accession>Q5P1J8</accession>
<proteinExistence type="inferred from homology"/>
<comment type="function">
    <text evidence="1">Catalyzes the isomerization between 2-isopropylmalate and 3-isopropylmalate, via the formation of 2-isopropylmaleate.</text>
</comment>
<comment type="catalytic activity">
    <reaction evidence="1">
        <text>(2R,3S)-3-isopropylmalate = (2S)-2-isopropylmalate</text>
        <dbReference type="Rhea" id="RHEA:32287"/>
        <dbReference type="ChEBI" id="CHEBI:1178"/>
        <dbReference type="ChEBI" id="CHEBI:35121"/>
        <dbReference type="EC" id="4.2.1.33"/>
    </reaction>
</comment>
<comment type="cofactor">
    <cofactor evidence="1">
        <name>[4Fe-4S] cluster</name>
        <dbReference type="ChEBI" id="CHEBI:49883"/>
    </cofactor>
    <text evidence="1">Binds 1 [4Fe-4S] cluster per subunit.</text>
</comment>
<comment type="pathway">
    <text evidence="1">Amino-acid biosynthesis; L-leucine biosynthesis; L-leucine from 3-methyl-2-oxobutanoate: step 2/4.</text>
</comment>
<comment type="subunit">
    <text evidence="1">Heterodimer of LeuC and LeuD.</text>
</comment>
<comment type="similarity">
    <text evidence="1">Belongs to the aconitase/IPM isomerase family. LeuC type 1 subfamily.</text>
</comment>
<keyword id="KW-0004">4Fe-4S</keyword>
<keyword id="KW-0028">Amino-acid biosynthesis</keyword>
<keyword id="KW-0100">Branched-chain amino acid biosynthesis</keyword>
<keyword id="KW-0408">Iron</keyword>
<keyword id="KW-0411">Iron-sulfur</keyword>
<keyword id="KW-0432">Leucine biosynthesis</keyword>
<keyword id="KW-0456">Lyase</keyword>
<keyword id="KW-0479">Metal-binding</keyword>
<keyword id="KW-1185">Reference proteome</keyword>